<feature type="chain" id="PRO_0000265062" description="Putative 3-methyladenine DNA glycosylase">
    <location>
        <begin position="1"/>
        <end position="202"/>
    </location>
</feature>
<reference key="1">
    <citation type="journal article" date="2006" name="Lancet">
        <title>Complete genome sequence of USA300, an epidemic clone of community-acquired meticillin-resistant Staphylococcus aureus.</title>
        <authorList>
            <person name="Diep B.A."/>
            <person name="Gill S.R."/>
            <person name="Chang R.F."/>
            <person name="Phan T.H."/>
            <person name="Chen J.H."/>
            <person name="Davidson M.G."/>
            <person name="Lin F."/>
            <person name="Lin J."/>
            <person name="Carleton H.A."/>
            <person name="Mongodin E.F."/>
            <person name="Sensabaugh G.F."/>
            <person name="Perdreau-Remington F."/>
        </authorList>
    </citation>
    <scope>NUCLEOTIDE SEQUENCE [LARGE SCALE GENOMIC DNA]</scope>
    <source>
        <strain>USA300</strain>
    </source>
</reference>
<protein>
    <recommendedName>
        <fullName evidence="1">Putative 3-methyladenine DNA glycosylase</fullName>
        <ecNumber evidence="1">3.2.2.-</ecNumber>
    </recommendedName>
</protein>
<keyword id="KW-0227">DNA damage</keyword>
<keyword id="KW-0234">DNA repair</keyword>
<keyword id="KW-0378">Hydrolase</keyword>
<sequence>MDFVNNDTRQIAKNLLGVKVIYQDTTQTYTGYIVETEAYLGLNDRAAHGYGGKITPKVTSLYKRGGTIYAHVMHTHLLINFVTKSEGIPEGVLIRAIEPEEGLSAMFRNRGKKGYEVTNGPGKWTKAFNIPRAIDGATLNDCRLSIDTKNRKYPKDIIASPRIGIPNKGDWTHKSLRYTVKGNPFVSRMRKSDCMFPEDTWK</sequence>
<dbReference type="EC" id="3.2.2.-" evidence="1"/>
<dbReference type="EMBL" id="CP000255">
    <property type="protein sequence ID" value="ABD21114.1"/>
    <property type="molecule type" value="Genomic_DNA"/>
</dbReference>
<dbReference type="RefSeq" id="WP_000348300.1">
    <property type="nucleotide sequence ID" value="NZ_CP027476.1"/>
</dbReference>
<dbReference type="SMR" id="Q2FEF3"/>
<dbReference type="KEGG" id="saa:SAUSA300_2290"/>
<dbReference type="HOGENOM" id="CLU_060471_2_0_9"/>
<dbReference type="OMA" id="VEAYHHT"/>
<dbReference type="Proteomes" id="UP000001939">
    <property type="component" value="Chromosome"/>
</dbReference>
<dbReference type="GO" id="GO:0003905">
    <property type="term" value="F:alkylbase DNA N-glycosylase activity"/>
    <property type="evidence" value="ECO:0007669"/>
    <property type="project" value="InterPro"/>
</dbReference>
<dbReference type="GO" id="GO:0003677">
    <property type="term" value="F:DNA binding"/>
    <property type="evidence" value="ECO:0007669"/>
    <property type="project" value="InterPro"/>
</dbReference>
<dbReference type="GO" id="GO:0006284">
    <property type="term" value="P:base-excision repair"/>
    <property type="evidence" value="ECO:0007669"/>
    <property type="project" value="InterPro"/>
</dbReference>
<dbReference type="CDD" id="cd00540">
    <property type="entry name" value="AAG"/>
    <property type="match status" value="1"/>
</dbReference>
<dbReference type="FunFam" id="3.10.300.10:FF:000001">
    <property type="entry name" value="Putative 3-methyladenine DNA glycosylase"/>
    <property type="match status" value="1"/>
</dbReference>
<dbReference type="Gene3D" id="3.10.300.10">
    <property type="entry name" value="Methylpurine-DNA glycosylase (MPG)"/>
    <property type="match status" value="1"/>
</dbReference>
<dbReference type="HAMAP" id="MF_00527">
    <property type="entry name" value="3MGH"/>
    <property type="match status" value="1"/>
</dbReference>
<dbReference type="InterPro" id="IPR011034">
    <property type="entry name" value="Formyl_transferase-like_C_sf"/>
</dbReference>
<dbReference type="InterPro" id="IPR003180">
    <property type="entry name" value="MPG"/>
</dbReference>
<dbReference type="InterPro" id="IPR036995">
    <property type="entry name" value="MPG_sf"/>
</dbReference>
<dbReference type="NCBIfam" id="TIGR00567">
    <property type="entry name" value="3mg"/>
    <property type="match status" value="1"/>
</dbReference>
<dbReference type="PANTHER" id="PTHR10429">
    <property type="entry name" value="DNA-3-METHYLADENINE GLYCOSYLASE"/>
    <property type="match status" value="1"/>
</dbReference>
<dbReference type="PANTHER" id="PTHR10429:SF0">
    <property type="entry name" value="DNA-3-METHYLADENINE GLYCOSYLASE"/>
    <property type="match status" value="1"/>
</dbReference>
<dbReference type="Pfam" id="PF02245">
    <property type="entry name" value="Pur_DNA_glyco"/>
    <property type="match status" value="1"/>
</dbReference>
<dbReference type="SUPFAM" id="SSF50486">
    <property type="entry name" value="FMT C-terminal domain-like"/>
    <property type="match status" value="1"/>
</dbReference>
<name>3MGH_STAA3</name>
<gene>
    <name type="ordered locus">SAUSA300_2290</name>
</gene>
<proteinExistence type="inferred from homology"/>
<evidence type="ECO:0000255" key="1">
    <source>
        <dbReference type="HAMAP-Rule" id="MF_00527"/>
    </source>
</evidence>
<organism>
    <name type="scientific">Staphylococcus aureus (strain USA300)</name>
    <dbReference type="NCBI Taxonomy" id="367830"/>
    <lineage>
        <taxon>Bacteria</taxon>
        <taxon>Bacillati</taxon>
        <taxon>Bacillota</taxon>
        <taxon>Bacilli</taxon>
        <taxon>Bacillales</taxon>
        <taxon>Staphylococcaceae</taxon>
        <taxon>Staphylococcus</taxon>
    </lineage>
</organism>
<comment type="similarity">
    <text evidence="1">Belongs to the DNA glycosylase MPG family.</text>
</comment>
<accession>Q2FEF3</accession>